<feature type="signal peptide" evidence="1">
    <location>
        <begin position="1"/>
        <end position="19"/>
    </location>
</feature>
<feature type="chain" id="PRO_0000285883" description="Plasminogen">
    <location>
        <begin position="20"/>
        <end position="810"/>
    </location>
</feature>
<feature type="chain" id="PRO_0000285884" description="Plasmin heavy chain A">
    <location>
        <begin position="20"/>
        <end position="580"/>
    </location>
</feature>
<feature type="peptide" id="PRO_0000285885" description="Activation peptide">
    <location>
        <begin position="20"/>
        <end position="96"/>
    </location>
</feature>
<feature type="chain" id="PRO_0000285886" description="Plasmin heavy chain A, short form">
    <location>
        <begin position="97"/>
        <end position="580"/>
    </location>
</feature>
<feature type="chain" id="PRO_0000285887" description="Plasmin light chain B">
    <location>
        <begin position="581"/>
        <end position="810"/>
    </location>
</feature>
<feature type="domain" description="PAN" evidence="5">
    <location>
        <begin position="20"/>
        <end position="98"/>
    </location>
</feature>
<feature type="domain" description="Kringle 1" evidence="3">
    <location>
        <begin position="103"/>
        <end position="181"/>
    </location>
</feature>
<feature type="domain" description="Kringle 2" evidence="3">
    <location>
        <begin position="184"/>
        <end position="262"/>
    </location>
</feature>
<feature type="domain" description="Kringle 3" evidence="3">
    <location>
        <begin position="275"/>
        <end position="352"/>
    </location>
</feature>
<feature type="domain" description="Kringle 4" evidence="3">
    <location>
        <begin position="377"/>
        <end position="454"/>
    </location>
</feature>
<feature type="domain" description="Kringle 5" evidence="3">
    <location>
        <begin position="481"/>
        <end position="560"/>
    </location>
</feature>
<feature type="domain" description="Peptidase S1" evidence="4">
    <location>
        <begin position="581"/>
        <end position="808"/>
    </location>
</feature>
<feature type="region of interest" description="Disordered" evidence="6">
    <location>
        <begin position="126"/>
        <end position="145"/>
    </location>
</feature>
<feature type="active site" description="Charge relay system" evidence="1">
    <location>
        <position position="622"/>
    </location>
</feature>
<feature type="active site" description="Charge relay system" evidence="1">
    <location>
        <position position="665"/>
    </location>
</feature>
<feature type="active site" description="Charge relay system" evidence="1">
    <location>
        <position position="760"/>
    </location>
</feature>
<feature type="binding site" evidence="1">
    <location>
        <position position="136"/>
    </location>
    <ligand>
        <name>L-lysine</name>
        <dbReference type="ChEBI" id="CHEBI:32551"/>
    </ligand>
</feature>
<feature type="binding site" evidence="1">
    <location>
        <position position="158"/>
    </location>
    <ligand>
        <name>L-lysine</name>
        <dbReference type="ChEBI" id="CHEBI:32551"/>
    </ligand>
</feature>
<feature type="binding site" evidence="1">
    <location>
        <position position="172"/>
    </location>
    <ligand>
        <name>L-lysine</name>
        <dbReference type="ChEBI" id="CHEBI:32551"/>
    </ligand>
</feature>
<feature type="binding site" evidence="1">
    <location>
        <position position="432"/>
    </location>
    <ligand>
        <name>L-lysine</name>
        <dbReference type="ChEBI" id="CHEBI:32551"/>
    </ligand>
</feature>
<feature type="binding site" evidence="1">
    <location>
        <position position="445"/>
    </location>
    <ligand>
        <name>L-lysine</name>
        <dbReference type="ChEBI" id="CHEBI:32551"/>
    </ligand>
</feature>
<feature type="site" description="Interacts with fibrin" evidence="1">
    <location>
        <position position="134"/>
    </location>
</feature>
<feature type="site" description="Interacts with fibrin" evidence="1">
    <location>
        <position position="136"/>
    </location>
</feature>
<feature type="modified residue" description="Phosphoserine" evidence="2">
    <location>
        <position position="597"/>
    </location>
</feature>
<feature type="modified residue" description="Phosphoserine" evidence="2">
    <location>
        <position position="688"/>
    </location>
</feature>
<feature type="glycosylation site" description="O-linked (GalNAc...) threonine" evidence="1">
    <location>
        <position position="365"/>
    </location>
</feature>
<feature type="disulfide bond" evidence="1">
    <location>
        <begin position="49"/>
        <end position="73"/>
    </location>
</feature>
<feature type="disulfide bond" evidence="1">
    <location>
        <begin position="53"/>
        <end position="61"/>
    </location>
</feature>
<feature type="disulfide bond" evidence="1">
    <location>
        <begin position="103"/>
        <end position="181"/>
    </location>
</feature>
<feature type="disulfide bond" evidence="1">
    <location>
        <begin position="124"/>
        <end position="164"/>
    </location>
</feature>
<feature type="disulfide bond" evidence="1">
    <location>
        <begin position="152"/>
        <end position="176"/>
    </location>
</feature>
<feature type="disulfide bond" evidence="1">
    <location>
        <begin position="185"/>
        <end position="262"/>
    </location>
</feature>
<feature type="disulfide bond" evidence="1">
    <location>
        <begin position="188"/>
        <end position="316"/>
    </location>
</feature>
<feature type="disulfide bond" evidence="1">
    <location>
        <begin position="206"/>
        <end position="245"/>
    </location>
</feature>
<feature type="disulfide bond" evidence="1">
    <location>
        <begin position="234"/>
        <end position="257"/>
    </location>
</feature>
<feature type="disulfide bond" evidence="1">
    <location>
        <begin position="275"/>
        <end position="352"/>
    </location>
</feature>
<feature type="disulfide bond" evidence="1">
    <location>
        <begin position="296"/>
        <end position="335"/>
    </location>
</feature>
<feature type="disulfide bond" evidence="1">
    <location>
        <begin position="324"/>
        <end position="347"/>
    </location>
</feature>
<feature type="disulfide bond" evidence="1">
    <location>
        <begin position="377"/>
        <end position="454"/>
    </location>
</feature>
<feature type="disulfide bond" evidence="1">
    <location>
        <begin position="398"/>
        <end position="437"/>
    </location>
</feature>
<feature type="disulfide bond" evidence="1">
    <location>
        <begin position="426"/>
        <end position="449"/>
    </location>
</feature>
<feature type="disulfide bond" evidence="1">
    <location>
        <begin position="481"/>
        <end position="560"/>
    </location>
</feature>
<feature type="disulfide bond" evidence="1">
    <location>
        <begin position="502"/>
        <end position="543"/>
    </location>
</feature>
<feature type="disulfide bond" evidence="1">
    <location>
        <begin position="531"/>
        <end position="555"/>
    </location>
</feature>
<feature type="disulfide bond" description="Interchain (between A and B chains)" evidence="1">
    <location>
        <begin position="567"/>
        <end position="685"/>
    </location>
</feature>
<feature type="disulfide bond" description="Interchain (between A and B chains)" evidence="1">
    <location>
        <begin position="577"/>
        <end position="585"/>
    </location>
</feature>
<feature type="disulfide bond" evidence="1">
    <location>
        <begin position="607"/>
        <end position="623"/>
    </location>
</feature>
<feature type="disulfide bond" evidence="1">
    <location>
        <begin position="699"/>
        <end position="766"/>
    </location>
</feature>
<feature type="disulfide bond" evidence="1">
    <location>
        <begin position="729"/>
        <end position="745"/>
    </location>
</feature>
<feature type="disulfide bond" evidence="1">
    <location>
        <begin position="756"/>
        <end position="784"/>
    </location>
</feature>
<keyword id="KW-0094">Blood coagulation</keyword>
<keyword id="KW-1015">Disulfide bond</keyword>
<keyword id="KW-0280">Fibrinolysis</keyword>
<keyword id="KW-0325">Glycoprotein</keyword>
<keyword id="KW-0356">Hemostasis</keyword>
<keyword id="KW-0378">Hydrolase</keyword>
<keyword id="KW-0420">Kringle</keyword>
<keyword id="KW-0597">Phosphoprotein</keyword>
<keyword id="KW-0645">Protease</keyword>
<keyword id="KW-1185">Reference proteome</keyword>
<keyword id="KW-0677">Repeat</keyword>
<keyword id="KW-0964">Secreted</keyword>
<keyword id="KW-0720">Serine protease</keyword>
<keyword id="KW-0732">Signal</keyword>
<keyword id="KW-0797">Tissue remodeling</keyword>
<keyword id="KW-0865">Zymogen</keyword>
<evidence type="ECO:0000250" key="1"/>
<evidence type="ECO:0000250" key="2">
    <source>
        <dbReference type="UniProtKB" id="P00747"/>
    </source>
</evidence>
<evidence type="ECO:0000255" key="3">
    <source>
        <dbReference type="PROSITE-ProRule" id="PRU00121"/>
    </source>
</evidence>
<evidence type="ECO:0000255" key="4">
    <source>
        <dbReference type="PROSITE-ProRule" id="PRU00274"/>
    </source>
</evidence>
<evidence type="ECO:0000255" key="5">
    <source>
        <dbReference type="PROSITE-ProRule" id="PRU00315"/>
    </source>
</evidence>
<evidence type="ECO:0000256" key="6">
    <source>
        <dbReference type="SAM" id="MobiDB-lite"/>
    </source>
</evidence>
<proteinExistence type="evidence at transcript level"/>
<reference key="1">
    <citation type="submission" date="2004-11" db="EMBL/GenBank/DDBJ databases">
        <authorList>
            <consortium name="The German cDNA consortium"/>
        </authorList>
    </citation>
    <scope>NUCLEOTIDE SEQUENCE [LARGE SCALE MRNA]</scope>
    <source>
        <tissue>Liver</tissue>
    </source>
</reference>
<accession>Q5R8X6</accession>
<protein>
    <recommendedName>
        <fullName>Plasminogen</fullName>
        <ecNumber>3.4.21.7</ecNumber>
    </recommendedName>
    <component>
        <recommendedName>
            <fullName>Plasmin heavy chain A</fullName>
        </recommendedName>
    </component>
    <component>
        <recommendedName>
            <fullName>Activation peptide</fullName>
        </recommendedName>
    </component>
    <component>
        <recommendedName>
            <fullName>Plasmin heavy chain A, short form</fullName>
        </recommendedName>
    </component>
    <component>
        <recommendedName>
            <fullName>Plasmin light chain B</fullName>
        </recommendedName>
    </component>
</protein>
<organism>
    <name type="scientific">Pongo abelii</name>
    <name type="common">Sumatran orangutan</name>
    <name type="synonym">Pongo pygmaeus abelii</name>
    <dbReference type="NCBI Taxonomy" id="9601"/>
    <lineage>
        <taxon>Eukaryota</taxon>
        <taxon>Metazoa</taxon>
        <taxon>Chordata</taxon>
        <taxon>Craniata</taxon>
        <taxon>Vertebrata</taxon>
        <taxon>Euteleostomi</taxon>
        <taxon>Mammalia</taxon>
        <taxon>Eutheria</taxon>
        <taxon>Euarchontoglires</taxon>
        <taxon>Primates</taxon>
        <taxon>Haplorrhini</taxon>
        <taxon>Catarrhini</taxon>
        <taxon>Hominidae</taxon>
        <taxon>Pongo</taxon>
    </lineage>
</organism>
<gene>
    <name type="primary">PLG</name>
</gene>
<sequence>MEHKEVVLLLLLFLKSGQGEPLDDYVNTQGASLFSVTKKQLRAGSIEECAAKCEEEKEFTCRAFQYHSKEQQCVIMAENRKSSIIIRMRDVVLFEKKVYLSECKTGNGKNYRGTMSKTKNGITCQKWSSTSPHRPRFSPATHPSEGLEENYCRNPDNDAQGPWCYTTDPEHRYDYCDIPECEEACMHCSGENYDGKISKTMSGLECQAWDSQSPHAHGYIPSKFPNKNLKKNYCRNPDGEPRPWCFTTDPNKRWELCDIPRCTTPPPSSGPTYQCLKGTGENYRGNVAVTVSGHTCQRWSAQTPQTHNRTPENFPCKNLDENYCRNPDGEKAPWCYTTNSQVRWEYCKIPSCGSSPVSTEQLDPTAPPELTPVVQDCYHGDGQSYRGTSSTTTTGKKCQSWSSMTPHWHQKTPENYPDAGLTMNYCRNPDADKGPWCFTTDPSVRWEYCNLKKCSGTEGSVVAPPPVVQLPNVETPSEEDCMFGNGKGYRGKRATTVTGTPCQEWAAQEPHRHSIFTPQTNPRAGLEKNYCRNPDGDEGGPWCYTTNPRKHYDYCDVPQCASSSFDCGKPQVEPKKCPGRVVGGCVANAHSWPWQVSLRTRFGTHFCGGTLISPEWVLTAAHCLEKSPRPSSYKVILGAHQEVNLEPHVQEIEVSRLFLEPTRADIALLKLSSPAVITDKVIPACLPSPNYVVAGRTECFITGWGETQGTFGAGLLKEAQLPVIENKVCNRYEFLNGRVKSTELCAGHLAGGTDSCQGDSGGPLVCFEKDKYILQGVTSWGLGCARPNKPGVYVRVSRFVTWIEGVMRNN</sequence>
<comment type="function">
    <text evidence="1">Plasmin dissolves the fibrin of blood clots and acts as a proteolytic factor in a variety of other processes including embryonic development, tissue remodeling, tumor invasion, and inflammation. In ovulation, weakens the walls of the Graafian follicle. It activates the urokinase-type plasminogen activator, collagenases and several complement zymogens, such as C1, C4 and C5. Cleavage of fibronectin and laminin leads to cell detachment and apoptosis. Also cleaves fibrin, thrombospondin and von Willebrand factor. Its role in tissue remodeling and tumor invasion may be modulated by CSPG4. Binds to cells (By similarity).</text>
</comment>
<comment type="catalytic activity">
    <reaction>
        <text>Preferential cleavage: Lys-|-Xaa &gt; Arg-|-Xaa, higher selectivity than trypsin. Converts fibrin into soluble products.</text>
        <dbReference type="EC" id="3.4.21.7"/>
    </reaction>
</comment>
<comment type="activity regulation">
    <text>Converted into plasmin by plasminogen activators, both plasminogen and its activator being bound to fibrin. Activated with catalytic amounts of streptokinase.</text>
</comment>
<comment type="subunit">
    <text evidence="2">Interacts with CSPG4 and AMOT. Interacts (via the Kringle domains) with HRG; the interaction tethers PLG to the cell surface and enhances its activation. Interacts (via Kringle 4 domain) with ADA; the interaction stimulates PLG activation when in complex with DPP4. Angiostatin: Interacts with ATP5F1A; the interaction inhibits most of the angiogenic effects of angiostatin.</text>
</comment>
<comment type="subcellular location">
    <subcellularLocation>
        <location evidence="1">Secreted</location>
    </subcellularLocation>
    <text evidence="1">Locates to the cell surface where it is proteolytically cleaved to produce the active plasmin. Interaction with HRG tethers it to the cell surface (By similarity).</text>
</comment>
<comment type="domain">
    <text evidence="1">Kringle domains mediate interaction with CSPG4.</text>
</comment>
<comment type="PTM">
    <text evidence="1">In the presence of the inhibitor, the activation involves only cleavage after Arg-580, yielding two chains held together by two disulfide bonds. In the absence of the inhibitor, the activation involves additionally the removal of the activation peptide (By similarity).</text>
</comment>
<comment type="miscellaneous">
    <text>Plasmin is inactivated by alpha-2-antiplasmin immediately after dissociation from the clot.</text>
</comment>
<comment type="miscellaneous">
    <text>In the presence of the inhibitor, the activation involves only cleavage after Arg-580, resulting in 2 chains held together by 2 disulfide bonds. Without the inhibitor, the activation also involves removal of the activation peptide.</text>
</comment>
<comment type="similarity">
    <text evidence="4">Belongs to the peptidase S1 family. Plasminogen subfamily.</text>
</comment>
<name>PLMN_PONAB</name>
<dbReference type="EC" id="3.4.21.7"/>
<dbReference type="EMBL" id="CR859622">
    <property type="protein sequence ID" value="CAH91784.1"/>
    <property type="molecule type" value="mRNA"/>
</dbReference>
<dbReference type="RefSeq" id="NP_001126035.1">
    <property type="nucleotide sequence ID" value="NM_001132563.2"/>
</dbReference>
<dbReference type="SMR" id="Q5R8X6"/>
<dbReference type="FunCoup" id="Q5R8X6">
    <property type="interactions" value="527"/>
</dbReference>
<dbReference type="STRING" id="9601.ENSPPYP00000024703"/>
<dbReference type="MEROPS" id="S01.233"/>
<dbReference type="GlyCosmos" id="Q5R8X6">
    <property type="glycosylation" value="1 site, No reported glycans"/>
</dbReference>
<dbReference type="GeneID" id="100172984"/>
<dbReference type="KEGG" id="pon:100172984"/>
<dbReference type="CTD" id="5340"/>
<dbReference type="eggNOG" id="ENOG502QVNP">
    <property type="taxonomic scope" value="Eukaryota"/>
</dbReference>
<dbReference type="InParanoid" id="Q5R8X6"/>
<dbReference type="OrthoDB" id="41905at2759"/>
<dbReference type="Proteomes" id="UP000001595">
    <property type="component" value="Unplaced"/>
</dbReference>
<dbReference type="GO" id="GO:0005615">
    <property type="term" value="C:extracellular space"/>
    <property type="evidence" value="ECO:0007669"/>
    <property type="project" value="TreeGrafter"/>
</dbReference>
<dbReference type="GO" id="GO:0004252">
    <property type="term" value="F:serine-type endopeptidase activity"/>
    <property type="evidence" value="ECO:0007669"/>
    <property type="project" value="UniProtKB-EC"/>
</dbReference>
<dbReference type="GO" id="GO:0005102">
    <property type="term" value="F:signaling receptor binding"/>
    <property type="evidence" value="ECO:0007669"/>
    <property type="project" value="TreeGrafter"/>
</dbReference>
<dbReference type="GO" id="GO:0007596">
    <property type="term" value="P:blood coagulation"/>
    <property type="evidence" value="ECO:0007669"/>
    <property type="project" value="UniProtKB-KW"/>
</dbReference>
<dbReference type="GO" id="GO:0042730">
    <property type="term" value="P:fibrinolysis"/>
    <property type="evidence" value="ECO:0007669"/>
    <property type="project" value="UniProtKB-KW"/>
</dbReference>
<dbReference type="GO" id="GO:0006508">
    <property type="term" value="P:proteolysis"/>
    <property type="evidence" value="ECO:0007669"/>
    <property type="project" value="UniProtKB-KW"/>
</dbReference>
<dbReference type="GO" id="GO:0048771">
    <property type="term" value="P:tissue remodeling"/>
    <property type="evidence" value="ECO:0007669"/>
    <property type="project" value="UniProtKB-KW"/>
</dbReference>
<dbReference type="CDD" id="cd00108">
    <property type="entry name" value="KR"/>
    <property type="match status" value="5"/>
</dbReference>
<dbReference type="CDD" id="cd01099">
    <property type="entry name" value="PAN_AP_HGF"/>
    <property type="match status" value="1"/>
</dbReference>
<dbReference type="CDD" id="cd00190">
    <property type="entry name" value="Tryp_SPc"/>
    <property type="match status" value="1"/>
</dbReference>
<dbReference type="FunFam" id="2.40.20.10:FF:000005">
    <property type="entry name" value="Plasminogen"/>
    <property type="match status" value="1"/>
</dbReference>
<dbReference type="FunFam" id="2.40.20.10:FF:000011">
    <property type="entry name" value="Plasminogen"/>
    <property type="match status" value="1"/>
</dbReference>
<dbReference type="FunFam" id="2.40.20.10:FF:000013">
    <property type="entry name" value="Plasminogen"/>
    <property type="match status" value="1"/>
</dbReference>
<dbReference type="FunFam" id="2.40.20.10:FF:000014">
    <property type="entry name" value="Plasminogen"/>
    <property type="match status" value="1"/>
</dbReference>
<dbReference type="FunFam" id="3.50.4.10:FF:000011">
    <property type="entry name" value="Plasminogen"/>
    <property type="match status" value="1"/>
</dbReference>
<dbReference type="FunFam" id="2.40.10.10:FF:000003">
    <property type="entry name" value="Transmembrane serine protease 3"/>
    <property type="match status" value="1"/>
</dbReference>
<dbReference type="Gene3D" id="3.50.4.10">
    <property type="entry name" value="Hepatocyte Growth Factor"/>
    <property type="match status" value="1"/>
</dbReference>
<dbReference type="Gene3D" id="2.40.20.10">
    <property type="entry name" value="Plasminogen Kringle 4"/>
    <property type="match status" value="4"/>
</dbReference>
<dbReference type="Gene3D" id="2.40.10.10">
    <property type="entry name" value="Trypsin-like serine proteases"/>
    <property type="match status" value="1"/>
</dbReference>
<dbReference type="InterPro" id="IPR000001">
    <property type="entry name" value="Kringle"/>
</dbReference>
<dbReference type="InterPro" id="IPR013806">
    <property type="entry name" value="Kringle-like"/>
</dbReference>
<dbReference type="InterPro" id="IPR018056">
    <property type="entry name" value="Kringle_CS"/>
</dbReference>
<dbReference type="InterPro" id="IPR038178">
    <property type="entry name" value="Kringle_sf"/>
</dbReference>
<dbReference type="InterPro" id="IPR003609">
    <property type="entry name" value="Pan_app"/>
</dbReference>
<dbReference type="InterPro" id="IPR023317">
    <property type="entry name" value="Pept_S1A_plasmin"/>
</dbReference>
<dbReference type="InterPro" id="IPR009003">
    <property type="entry name" value="Peptidase_S1_PA"/>
</dbReference>
<dbReference type="InterPro" id="IPR043504">
    <property type="entry name" value="Peptidase_S1_PA_chymotrypsin"/>
</dbReference>
<dbReference type="InterPro" id="IPR001314">
    <property type="entry name" value="Peptidase_S1A"/>
</dbReference>
<dbReference type="InterPro" id="IPR050759">
    <property type="entry name" value="Serine_protease_kringle"/>
</dbReference>
<dbReference type="InterPro" id="IPR001254">
    <property type="entry name" value="Trypsin_dom"/>
</dbReference>
<dbReference type="InterPro" id="IPR018114">
    <property type="entry name" value="TRYPSIN_HIS"/>
</dbReference>
<dbReference type="InterPro" id="IPR033116">
    <property type="entry name" value="TRYPSIN_SER"/>
</dbReference>
<dbReference type="PANTHER" id="PTHR24261:SF2">
    <property type="entry name" value="LIPOPROTEIN(A)"/>
    <property type="match status" value="1"/>
</dbReference>
<dbReference type="PANTHER" id="PTHR24261">
    <property type="entry name" value="PLASMINOGEN-RELATED"/>
    <property type="match status" value="1"/>
</dbReference>
<dbReference type="Pfam" id="PF00051">
    <property type="entry name" value="Kringle"/>
    <property type="match status" value="5"/>
</dbReference>
<dbReference type="Pfam" id="PF00024">
    <property type="entry name" value="PAN_1"/>
    <property type="match status" value="1"/>
</dbReference>
<dbReference type="Pfam" id="PF00089">
    <property type="entry name" value="Trypsin"/>
    <property type="match status" value="1"/>
</dbReference>
<dbReference type="PIRSF" id="PIRSF001150">
    <property type="entry name" value="Plasmin"/>
    <property type="match status" value="1"/>
</dbReference>
<dbReference type="PRINTS" id="PR00722">
    <property type="entry name" value="CHYMOTRYPSIN"/>
</dbReference>
<dbReference type="PRINTS" id="PR00018">
    <property type="entry name" value="KRINGLE"/>
</dbReference>
<dbReference type="SMART" id="SM00130">
    <property type="entry name" value="KR"/>
    <property type="match status" value="5"/>
</dbReference>
<dbReference type="SMART" id="SM00473">
    <property type="entry name" value="PAN_AP"/>
    <property type="match status" value="1"/>
</dbReference>
<dbReference type="SMART" id="SM00020">
    <property type="entry name" value="Tryp_SPc"/>
    <property type="match status" value="1"/>
</dbReference>
<dbReference type="SUPFAM" id="SSF57414">
    <property type="entry name" value="Hairpin loop containing domain-like"/>
    <property type="match status" value="1"/>
</dbReference>
<dbReference type="SUPFAM" id="SSF57440">
    <property type="entry name" value="Kringle-like"/>
    <property type="match status" value="5"/>
</dbReference>
<dbReference type="SUPFAM" id="SSF50494">
    <property type="entry name" value="Trypsin-like serine proteases"/>
    <property type="match status" value="1"/>
</dbReference>
<dbReference type="PROSITE" id="PS00021">
    <property type="entry name" value="KRINGLE_1"/>
    <property type="match status" value="5"/>
</dbReference>
<dbReference type="PROSITE" id="PS50070">
    <property type="entry name" value="KRINGLE_2"/>
    <property type="match status" value="5"/>
</dbReference>
<dbReference type="PROSITE" id="PS50948">
    <property type="entry name" value="PAN"/>
    <property type="match status" value="1"/>
</dbReference>
<dbReference type="PROSITE" id="PS50240">
    <property type="entry name" value="TRYPSIN_DOM"/>
    <property type="match status" value="1"/>
</dbReference>
<dbReference type="PROSITE" id="PS00134">
    <property type="entry name" value="TRYPSIN_HIS"/>
    <property type="match status" value="1"/>
</dbReference>
<dbReference type="PROSITE" id="PS00135">
    <property type="entry name" value="TRYPSIN_SER"/>
    <property type="match status" value="1"/>
</dbReference>